<feature type="chain" id="PRO_0000057585" description="Gamma-crystallin A">
    <location>
        <begin position="1"/>
        <end position="174"/>
    </location>
</feature>
<feature type="domain" description="Beta/gamma crystallin 'Greek key' 1" evidence="2">
    <location>
        <begin position="2"/>
        <end position="40"/>
    </location>
</feature>
<feature type="domain" description="Beta/gamma crystallin 'Greek key' 2" evidence="2">
    <location>
        <begin position="41"/>
        <end position="83"/>
    </location>
</feature>
<feature type="domain" description="Beta/gamma crystallin 'Greek key' 3" evidence="2">
    <location>
        <begin position="88"/>
        <end position="128"/>
    </location>
</feature>
<feature type="domain" description="Beta/gamma crystallin 'Greek key' 4" evidence="2">
    <location>
        <begin position="129"/>
        <end position="171"/>
    </location>
</feature>
<feature type="region of interest" description="Connecting peptide">
    <location>
        <begin position="84"/>
        <end position="87"/>
    </location>
</feature>
<feature type="sequence variant" id="VAR_084796" description="Found in a patient with congenital bilateral cataract; uncertain significance; dbSNP:rs371745828." evidence="5">
    <original>S</original>
    <variation>C</variation>
    <location>
        <position position="40"/>
    </location>
</feature>
<feature type="sequence variant" id="VAR_084797" description="Found in a patient with congenital pediatric onset cataracts; uncertain significance; dbSNP:rs139353014." evidence="4">
    <original>R</original>
    <variation>H</variation>
    <location>
        <position position="80"/>
    </location>
</feature>
<feature type="sequence variant" id="VAR_021139" description="In dbSNP:rs763049410." evidence="3 6">
    <original>P</original>
    <variation>L</variation>
    <location>
        <position position="148"/>
    </location>
</feature>
<reference key="1">
    <citation type="journal article" date="1987" name="Mol. Cell. Biol.">
        <title>Gamma-crystallins of the human eye lens: expression analysis of five members of the gene family.</title>
        <authorList>
            <person name="Meakin S.O."/>
            <person name="Du R.P."/>
            <person name="Tsui L.-C."/>
            <person name="Breitman M.L."/>
        </authorList>
    </citation>
    <scope>NUCLEOTIDE SEQUENCE [GENOMIC DNA]</scope>
    <scope>VARIANT LEU-148</scope>
</reference>
<reference key="2">
    <citation type="submission" date="2007-02" db="EMBL/GenBank/DDBJ databases">
        <title>Human gammaA-crystallin.</title>
        <authorList>
            <person name="Wistow G."/>
        </authorList>
    </citation>
    <scope>NUCLEOTIDE SEQUENCE [MRNA]</scope>
    <source>
        <tissue>Lens</tissue>
    </source>
</reference>
<reference key="3">
    <citation type="journal article" date="2005" name="Nature">
        <title>Generation and annotation of the DNA sequences of human chromosomes 2 and 4.</title>
        <authorList>
            <person name="Hillier L.W."/>
            <person name="Graves T.A."/>
            <person name="Fulton R.S."/>
            <person name="Fulton L.A."/>
            <person name="Pepin K.H."/>
            <person name="Minx P."/>
            <person name="Wagner-McPherson C."/>
            <person name="Layman D."/>
            <person name="Wylie K."/>
            <person name="Sekhon M."/>
            <person name="Becker M.C."/>
            <person name="Fewell G.A."/>
            <person name="Delehaunty K.D."/>
            <person name="Miner T.L."/>
            <person name="Nash W.E."/>
            <person name="Kremitzki C."/>
            <person name="Oddy L."/>
            <person name="Du H."/>
            <person name="Sun H."/>
            <person name="Bradshaw-Cordum H."/>
            <person name="Ali J."/>
            <person name="Carter J."/>
            <person name="Cordes M."/>
            <person name="Harris A."/>
            <person name="Isak A."/>
            <person name="van Brunt A."/>
            <person name="Nguyen C."/>
            <person name="Du F."/>
            <person name="Courtney L."/>
            <person name="Kalicki J."/>
            <person name="Ozersky P."/>
            <person name="Abbott S."/>
            <person name="Armstrong J."/>
            <person name="Belter E.A."/>
            <person name="Caruso L."/>
            <person name="Cedroni M."/>
            <person name="Cotton M."/>
            <person name="Davidson T."/>
            <person name="Desai A."/>
            <person name="Elliott G."/>
            <person name="Erb T."/>
            <person name="Fronick C."/>
            <person name="Gaige T."/>
            <person name="Haakenson W."/>
            <person name="Haglund K."/>
            <person name="Holmes A."/>
            <person name="Harkins R."/>
            <person name="Kim K."/>
            <person name="Kruchowski S.S."/>
            <person name="Strong C.M."/>
            <person name="Grewal N."/>
            <person name="Goyea E."/>
            <person name="Hou S."/>
            <person name="Levy A."/>
            <person name="Martinka S."/>
            <person name="Mead K."/>
            <person name="McLellan M.D."/>
            <person name="Meyer R."/>
            <person name="Randall-Maher J."/>
            <person name="Tomlinson C."/>
            <person name="Dauphin-Kohlberg S."/>
            <person name="Kozlowicz-Reilly A."/>
            <person name="Shah N."/>
            <person name="Swearengen-Shahid S."/>
            <person name="Snider J."/>
            <person name="Strong J.T."/>
            <person name="Thompson J."/>
            <person name="Yoakum M."/>
            <person name="Leonard S."/>
            <person name="Pearman C."/>
            <person name="Trani L."/>
            <person name="Radionenko M."/>
            <person name="Waligorski J.E."/>
            <person name="Wang C."/>
            <person name="Rock S.M."/>
            <person name="Tin-Wollam A.-M."/>
            <person name="Maupin R."/>
            <person name="Latreille P."/>
            <person name="Wendl M.C."/>
            <person name="Yang S.-P."/>
            <person name="Pohl C."/>
            <person name="Wallis J.W."/>
            <person name="Spieth J."/>
            <person name="Bieri T.A."/>
            <person name="Berkowicz N."/>
            <person name="Nelson J.O."/>
            <person name="Osborne J."/>
            <person name="Ding L."/>
            <person name="Meyer R."/>
            <person name="Sabo A."/>
            <person name="Shotland Y."/>
            <person name="Sinha P."/>
            <person name="Wohldmann P.E."/>
            <person name="Cook L.L."/>
            <person name="Hickenbotham M.T."/>
            <person name="Eldred J."/>
            <person name="Williams D."/>
            <person name="Jones T.A."/>
            <person name="She X."/>
            <person name="Ciccarelli F.D."/>
            <person name="Izaurralde E."/>
            <person name="Taylor J."/>
            <person name="Schmutz J."/>
            <person name="Myers R.M."/>
            <person name="Cox D.R."/>
            <person name="Huang X."/>
            <person name="McPherson J.D."/>
            <person name="Mardis E.R."/>
            <person name="Clifton S.W."/>
            <person name="Warren W.C."/>
            <person name="Chinwalla A.T."/>
            <person name="Eddy S.R."/>
            <person name="Marra M.A."/>
            <person name="Ovcharenko I."/>
            <person name="Furey T.S."/>
            <person name="Miller W."/>
            <person name="Eichler E.E."/>
            <person name="Bork P."/>
            <person name="Suyama M."/>
            <person name="Torrents D."/>
            <person name="Waterston R.H."/>
            <person name="Wilson R.K."/>
        </authorList>
    </citation>
    <scope>NUCLEOTIDE SEQUENCE [LARGE SCALE GENOMIC DNA]</scope>
</reference>
<reference key="4">
    <citation type="journal article" date="2003" name="Biochem. Biophys. Res. Commun.">
        <title>Homology models of human gamma-crystallins: structural study of the extensive charge network in gamma-crystallins.</title>
        <authorList>
            <person name="Salim A."/>
            <person name="Zaidi Z.H."/>
        </authorList>
    </citation>
    <scope>3D-STRUCTURE MODELING</scope>
</reference>
<reference key="5">
    <citation type="journal article" date="2002" name="J. Med. Genet.">
        <title>Novel mutations in the gamma-crystallin genes cause autosomal dominant congenital cataracts.</title>
        <authorList>
            <person name="Santhiya S.T."/>
            <person name="Shyam Manohar M."/>
            <person name="Rawlley D."/>
            <person name="Vijayalakshmi P."/>
            <person name="Namperumalsamy P."/>
            <person name="Gopinath P.M."/>
            <person name="Loester J."/>
            <person name="Graw J."/>
        </authorList>
    </citation>
    <scope>VARIANT LEU-148</scope>
</reference>
<reference key="6">
    <citation type="journal article" date="2017" name="G3 (Bethesda)">
        <title>High-Throughput Genetic Screening of 51 Pediatric Cataract Genes Identifies Causative Mutations in Inherited Pediatric Cataract in South Eastern Australia.</title>
        <authorList>
            <person name="Javadiyan S."/>
            <person name="Craig J.E."/>
            <person name="Souzeau E."/>
            <person name="Sharma S."/>
            <person name="Lower K.M."/>
            <person name="Mackey D.A."/>
            <person name="Staffieri S.E."/>
            <person name="Elder J.E."/>
            <person name="Taranath D."/>
            <person name="Straga T."/>
            <person name="Black J."/>
            <person name="Pater J."/>
            <person name="Casey T."/>
            <person name="Hewitt A.W."/>
            <person name="Burdon K.P."/>
        </authorList>
    </citation>
    <scope>VARIANT HIS-80</scope>
</reference>
<reference key="7">
    <citation type="journal article" date="2020" name="Orphanet J. Rare Dis.">
        <title>The genetic landscape of crystallins in congenital cataract.</title>
        <authorList>
            <person name="Berry V."/>
            <person name="Ionides A."/>
            <person name="Pontikos N."/>
            <person name="Georgiou M."/>
            <person name="Yu J."/>
            <person name="Ocaka L.A."/>
            <person name="Moore A.T."/>
            <person name="Quinlan R.A."/>
            <person name="Michaelides M."/>
        </authorList>
    </citation>
    <scope>VARIANT CYS-40</scope>
</reference>
<dbReference type="EMBL" id="M17316">
    <property type="protein sequence ID" value="AAA52108.1"/>
    <property type="molecule type" value="Genomic_DNA"/>
</dbReference>
<dbReference type="EMBL" id="M17315">
    <property type="protein sequence ID" value="AAA52108.1"/>
    <property type="status" value="JOINED"/>
    <property type="molecule type" value="Genomic_DNA"/>
</dbReference>
<dbReference type="EMBL" id="EF426311">
    <property type="protein sequence ID" value="ABO14696.1"/>
    <property type="molecule type" value="mRNA"/>
</dbReference>
<dbReference type="EMBL" id="AC016697">
    <property type="protein sequence ID" value="AAX93220.1"/>
    <property type="molecule type" value="Genomic_DNA"/>
</dbReference>
<dbReference type="CCDS" id="CCDS33367.1"/>
<dbReference type="PIR" id="A26912">
    <property type="entry name" value="A26912"/>
</dbReference>
<dbReference type="RefSeq" id="NP_055432.2">
    <property type="nucleotide sequence ID" value="NM_014617.4"/>
</dbReference>
<dbReference type="SMR" id="P11844"/>
<dbReference type="BioGRID" id="107808">
    <property type="interactions" value="5"/>
</dbReference>
<dbReference type="FunCoup" id="P11844">
    <property type="interactions" value="2"/>
</dbReference>
<dbReference type="STRING" id="9606.ENSP00000302105"/>
<dbReference type="iPTMnet" id="P11844"/>
<dbReference type="BioMuta" id="CRYGA"/>
<dbReference type="DMDM" id="148887193"/>
<dbReference type="MassIVE" id="P11844"/>
<dbReference type="PaxDb" id="9606-ENSP00000302105"/>
<dbReference type="PeptideAtlas" id="P11844"/>
<dbReference type="ProteomicsDB" id="52808"/>
<dbReference type="Antibodypedia" id="54429">
    <property type="antibodies" value="20 antibodies from 12 providers"/>
</dbReference>
<dbReference type="DNASU" id="1418"/>
<dbReference type="Ensembl" id="ENST00000304502.5">
    <property type="protein sequence ID" value="ENSP00000302105.4"/>
    <property type="gene ID" value="ENSG00000168582.5"/>
</dbReference>
<dbReference type="GeneID" id="1418"/>
<dbReference type="KEGG" id="hsa:1418"/>
<dbReference type="MANE-Select" id="ENST00000304502.5">
    <property type="protein sequence ID" value="ENSP00000302105.4"/>
    <property type="RefSeq nucleotide sequence ID" value="NM_014617.4"/>
    <property type="RefSeq protein sequence ID" value="NP_055432.2"/>
</dbReference>
<dbReference type="UCSC" id="uc002vcq.5">
    <property type="organism name" value="human"/>
</dbReference>
<dbReference type="AGR" id="HGNC:2408"/>
<dbReference type="CTD" id="1418"/>
<dbReference type="DisGeNET" id="1418"/>
<dbReference type="GeneCards" id="CRYGA"/>
<dbReference type="HGNC" id="HGNC:2408">
    <property type="gene designation" value="CRYGA"/>
</dbReference>
<dbReference type="HPA" id="ENSG00000168582">
    <property type="expression patterns" value="Not detected"/>
</dbReference>
<dbReference type="MalaCards" id="CRYGA"/>
<dbReference type="MIM" id="123660">
    <property type="type" value="gene"/>
</dbReference>
<dbReference type="neXtProt" id="NX_P11844"/>
<dbReference type="OpenTargets" id="ENSG00000168582"/>
<dbReference type="PharmGKB" id="PA26915"/>
<dbReference type="VEuPathDB" id="HostDB:ENSG00000168582"/>
<dbReference type="eggNOG" id="ENOG502RXJY">
    <property type="taxonomic scope" value="Eukaryota"/>
</dbReference>
<dbReference type="GeneTree" id="ENSGT00940000156190"/>
<dbReference type="HOGENOM" id="CLU_081883_1_1_1"/>
<dbReference type="InParanoid" id="P11844"/>
<dbReference type="OMA" id="HEIHSLH"/>
<dbReference type="OrthoDB" id="8407241at2759"/>
<dbReference type="PAN-GO" id="P11844">
    <property type="GO annotations" value="3 GO annotations based on evolutionary models"/>
</dbReference>
<dbReference type="PhylomeDB" id="P11844"/>
<dbReference type="PathwayCommons" id="P11844"/>
<dbReference type="SignaLink" id="P11844"/>
<dbReference type="BioGRID-ORCS" id="1418">
    <property type="hits" value="11 hits in 1147 CRISPR screens"/>
</dbReference>
<dbReference type="GeneWiki" id="CRYGA"/>
<dbReference type="GenomeRNAi" id="1418"/>
<dbReference type="Pharos" id="P11844">
    <property type="development level" value="Tdark"/>
</dbReference>
<dbReference type="PRO" id="PR:P11844"/>
<dbReference type="Proteomes" id="UP000005640">
    <property type="component" value="Chromosome 2"/>
</dbReference>
<dbReference type="RNAct" id="P11844">
    <property type="molecule type" value="protein"/>
</dbReference>
<dbReference type="Bgee" id="ENSG00000168582">
    <property type="expression patterns" value="Expressed in male germ line stem cell (sensu Vertebrata) in testis and 27 other cell types or tissues"/>
</dbReference>
<dbReference type="ExpressionAtlas" id="P11844">
    <property type="expression patterns" value="baseline and differential"/>
</dbReference>
<dbReference type="GO" id="GO:0005212">
    <property type="term" value="F:structural constituent of eye lens"/>
    <property type="evidence" value="ECO:0000318"/>
    <property type="project" value="GO_Central"/>
</dbReference>
<dbReference type="GO" id="GO:0002088">
    <property type="term" value="P:lens development in camera-type eye"/>
    <property type="evidence" value="ECO:0000318"/>
    <property type="project" value="GO_Central"/>
</dbReference>
<dbReference type="GO" id="GO:0007601">
    <property type="term" value="P:visual perception"/>
    <property type="evidence" value="ECO:0000318"/>
    <property type="project" value="GO_Central"/>
</dbReference>
<dbReference type="FunFam" id="2.60.20.10:FF:000001">
    <property type="entry name" value="Crystallin gamma S"/>
    <property type="match status" value="1"/>
</dbReference>
<dbReference type="FunFam" id="2.60.20.10:FF:000003">
    <property type="entry name" value="Crystallin gamma S"/>
    <property type="match status" value="1"/>
</dbReference>
<dbReference type="Gene3D" id="2.60.20.10">
    <property type="entry name" value="Crystallins"/>
    <property type="match status" value="2"/>
</dbReference>
<dbReference type="InterPro" id="IPR050252">
    <property type="entry name" value="Beta/Gamma-Crystallin"/>
</dbReference>
<dbReference type="InterPro" id="IPR001064">
    <property type="entry name" value="Beta/gamma_crystallin"/>
</dbReference>
<dbReference type="InterPro" id="IPR011024">
    <property type="entry name" value="G_crystallin-like"/>
</dbReference>
<dbReference type="PANTHER" id="PTHR11818">
    <property type="entry name" value="BETA/GAMMA CRYSTALLIN"/>
    <property type="match status" value="1"/>
</dbReference>
<dbReference type="PANTHER" id="PTHR11818:SF123">
    <property type="entry name" value="GAMMA-CRYSTALLIN A"/>
    <property type="match status" value="1"/>
</dbReference>
<dbReference type="Pfam" id="PF00030">
    <property type="entry name" value="Crystall"/>
    <property type="match status" value="2"/>
</dbReference>
<dbReference type="PRINTS" id="PR01367">
    <property type="entry name" value="BGCRYSTALLIN"/>
</dbReference>
<dbReference type="SMART" id="SM00247">
    <property type="entry name" value="XTALbg"/>
    <property type="match status" value="2"/>
</dbReference>
<dbReference type="SUPFAM" id="SSF49695">
    <property type="entry name" value="gamma-Crystallin-like"/>
    <property type="match status" value="1"/>
</dbReference>
<dbReference type="PROSITE" id="PS50915">
    <property type="entry name" value="CRYSTALLIN_BETA_GAMMA"/>
    <property type="match status" value="4"/>
</dbReference>
<gene>
    <name type="primary">CRYGA</name>
    <name type="synonym">CRYG1</name>
</gene>
<comment type="function">
    <text>Crystallins are the dominant structural components of the vertebrate eye lens.</text>
</comment>
<comment type="subunit">
    <text evidence="1">Monomer.</text>
</comment>
<comment type="domain">
    <text>Has a two-domain beta-structure, folded into four very similar Greek key motifs.</text>
</comment>
<comment type="similarity">
    <text evidence="7">Belongs to the beta/gamma-crystallin family.</text>
</comment>
<protein>
    <recommendedName>
        <fullName>Gamma-crystallin A</fullName>
    </recommendedName>
    <alternativeName>
        <fullName>Gamma-A-crystallin</fullName>
    </alternativeName>
    <alternativeName>
        <fullName>Gamma-crystallin 5</fullName>
    </alternativeName>
</protein>
<proteinExistence type="evidence at protein level"/>
<name>CRGA_HUMAN</name>
<keyword id="KW-0273">Eye lens protein</keyword>
<keyword id="KW-1267">Proteomics identification</keyword>
<keyword id="KW-1185">Reference proteome</keyword>
<keyword id="KW-0677">Repeat</keyword>
<sequence length="174" mass="20877">MGKITFYEDRDFQGRCYNCISDCPNLRVYFSRCNSIRVDSGCWMLYERPNYQGHQYFLRRGKYPDYQHWMGLSDSVQSCRIIPHTSSHKLRLYERDDYRGLMSELTDDCACVPELFRLPEIYSLHVLEGCWVLYEMPNYRGRQYLLRPGDYRRYHDWGGADAKVGSLRRVTDLY</sequence>
<accession>P11844</accession>
<accession>Q53ST5</accession>
<evidence type="ECO:0000250" key="1"/>
<evidence type="ECO:0000255" key="2">
    <source>
        <dbReference type="PROSITE-ProRule" id="PRU00028"/>
    </source>
</evidence>
<evidence type="ECO:0000269" key="3">
    <source>
    </source>
</evidence>
<evidence type="ECO:0000269" key="4">
    <source>
    </source>
</evidence>
<evidence type="ECO:0000269" key="5">
    <source>
    </source>
</evidence>
<evidence type="ECO:0000269" key="6">
    <source>
    </source>
</evidence>
<evidence type="ECO:0000305" key="7"/>
<organism>
    <name type="scientific">Homo sapiens</name>
    <name type="common">Human</name>
    <dbReference type="NCBI Taxonomy" id="9606"/>
    <lineage>
        <taxon>Eukaryota</taxon>
        <taxon>Metazoa</taxon>
        <taxon>Chordata</taxon>
        <taxon>Craniata</taxon>
        <taxon>Vertebrata</taxon>
        <taxon>Euteleostomi</taxon>
        <taxon>Mammalia</taxon>
        <taxon>Eutheria</taxon>
        <taxon>Euarchontoglires</taxon>
        <taxon>Primates</taxon>
        <taxon>Haplorrhini</taxon>
        <taxon>Catarrhini</taxon>
        <taxon>Hominidae</taxon>
        <taxon>Homo</taxon>
    </lineage>
</organism>